<evidence type="ECO:0000255" key="1">
    <source>
        <dbReference type="HAMAP-Rule" id="MF_00031"/>
    </source>
</evidence>
<gene>
    <name evidence="1" type="primary">ruvA</name>
    <name type="ordered locus">Lferr_0062</name>
</gene>
<protein>
    <recommendedName>
        <fullName evidence="1">Holliday junction branch migration complex subunit RuvA</fullName>
    </recommendedName>
</protein>
<keyword id="KW-0963">Cytoplasm</keyword>
<keyword id="KW-0227">DNA damage</keyword>
<keyword id="KW-0233">DNA recombination</keyword>
<keyword id="KW-0234">DNA repair</keyword>
<keyword id="KW-0238">DNA-binding</keyword>
<organism>
    <name type="scientific">Acidithiobacillus ferrooxidans (strain ATCC 53993 / BNL-5-31)</name>
    <name type="common">Leptospirillum ferrooxidans (ATCC 53993)</name>
    <dbReference type="NCBI Taxonomy" id="380394"/>
    <lineage>
        <taxon>Bacteria</taxon>
        <taxon>Pseudomonadati</taxon>
        <taxon>Pseudomonadota</taxon>
        <taxon>Acidithiobacillia</taxon>
        <taxon>Acidithiobacillales</taxon>
        <taxon>Acidithiobacillaceae</taxon>
        <taxon>Acidithiobacillus</taxon>
    </lineage>
</organism>
<name>RUVA_ACIF5</name>
<dbReference type="EMBL" id="CP001132">
    <property type="protein sequence ID" value="ACH82324.1"/>
    <property type="molecule type" value="Genomic_DNA"/>
</dbReference>
<dbReference type="RefSeq" id="WP_009567692.1">
    <property type="nucleotide sequence ID" value="NC_011206.1"/>
</dbReference>
<dbReference type="SMR" id="B5EJL8"/>
<dbReference type="GeneID" id="65279460"/>
<dbReference type="KEGG" id="afe:Lferr_0062"/>
<dbReference type="eggNOG" id="COG0632">
    <property type="taxonomic scope" value="Bacteria"/>
</dbReference>
<dbReference type="HOGENOM" id="CLU_087936_0_0_6"/>
<dbReference type="GO" id="GO:0005737">
    <property type="term" value="C:cytoplasm"/>
    <property type="evidence" value="ECO:0007669"/>
    <property type="project" value="UniProtKB-SubCell"/>
</dbReference>
<dbReference type="GO" id="GO:0009379">
    <property type="term" value="C:Holliday junction helicase complex"/>
    <property type="evidence" value="ECO:0007669"/>
    <property type="project" value="InterPro"/>
</dbReference>
<dbReference type="GO" id="GO:0048476">
    <property type="term" value="C:Holliday junction resolvase complex"/>
    <property type="evidence" value="ECO:0007669"/>
    <property type="project" value="UniProtKB-UniRule"/>
</dbReference>
<dbReference type="GO" id="GO:0005524">
    <property type="term" value="F:ATP binding"/>
    <property type="evidence" value="ECO:0007669"/>
    <property type="project" value="InterPro"/>
</dbReference>
<dbReference type="GO" id="GO:0000400">
    <property type="term" value="F:four-way junction DNA binding"/>
    <property type="evidence" value="ECO:0007669"/>
    <property type="project" value="UniProtKB-UniRule"/>
</dbReference>
<dbReference type="GO" id="GO:0009378">
    <property type="term" value="F:four-way junction helicase activity"/>
    <property type="evidence" value="ECO:0007669"/>
    <property type="project" value="InterPro"/>
</dbReference>
<dbReference type="GO" id="GO:0006310">
    <property type="term" value="P:DNA recombination"/>
    <property type="evidence" value="ECO:0007669"/>
    <property type="project" value="UniProtKB-UniRule"/>
</dbReference>
<dbReference type="GO" id="GO:0006281">
    <property type="term" value="P:DNA repair"/>
    <property type="evidence" value="ECO:0007669"/>
    <property type="project" value="UniProtKB-UniRule"/>
</dbReference>
<dbReference type="CDD" id="cd14332">
    <property type="entry name" value="UBA_RuvA_C"/>
    <property type="match status" value="1"/>
</dbReference>
<dbReference type="Gene3D" id="1.10.150.20">
    <property type="entry name" value="5' to 3' exonuclease, C-terminal subdomain"/>
    <property type="match status" value="1"/>
</dbReference>
<dbReference type="Gene3D" id="1.10.8.10">
    <property type="entry name" value="DNA helicase RuvA subunit, C-terminal domain"/>
    <property type="match status" value="1"/>
</dbReference>
<dbReference type="Gene3D" id="2.40.50.140">
    <property type="entry name" value="Nucleic acid-binding proteins"/>
    <property type="match status" value="1"/>
</dbReference>
<dbReference type="HAMAP" id="MF_00031">
    <property type="entry name" value="DNA_HJ_migration_RuvA"/>
    <property type="match status" value="1"/>
</dbReference>
<dbReference type="InterPro" id="IPR013849">
    <property type="entry name" value="DNA_helicase_Holl-junc_RuvA_I"/>
</dbReference>
<dbReference type="InterPro" id="IPR003583">
    <property type="entry name" value="Hlx-hairpin-Hlx_DNA-bd_motif"/>
</dbReference>
<dbReference type="InterPro" id="IPR012340">
    <property type="entry name" value="NA-bd_OB-fold"/>
</dbReference>
<dbReference type="InterPro" id="IPR000085">
    <property type="entry name" value="RuvA"/>
</dbReference>
<dbReference type="InterPro" id="IPR010994">
    <property type="entry name" value="RuvA_2-like"/>
</dbReference>
<dbReference type="InterPro" id="IPR011114">
    <property type="entry name" value="RuvA_C"/>
</dbReference>
<dbReference type="InterPro" id="IPR036267">
    <property type="entry name" value="RuvA_C_sf"/>
</dbReference>
<dbReference type="NCBIfam" id="TIGR00084">
    <property type="entry name" value="ruvA"/>
    <property type="match status" value="1"/>
</dbReference>
<dbReference type="Pfam" id="PF14520">
    <property type="entry name" value="HHH_5"/>
    <property type="match status" value="1"/>
</dbReference>
<dbReference type="Pfam" id="PF07499">
    <property type="entry name" value="RuvA_C"/>
    <property type="match status" value="1"/>
</dbReference>
<dbReference type="Pfam" id="PF01330">
    <property type="entry name" value="RuvA_N"/>
    <property type="match status" value="1"/>
</dbReference>
<dbReference type="SMART" id="SM00278">
    <property type="entry name" value="HhH1"/>
    <property type="match status" value="2"/>
</dbReference>
<dbReference type="SUPFAM" id="SSF46929">
    <property type="entry name" value="DNA helicase RuvA subunit, C-terminal domain"/>
    <property type="match status" value="1"/>
</dbReference>
<dbReference type="SUPFAM" id="SSF50249">
    <property type="entry name" value="Nucleic acid-binding proteins"/>
    <property type="match status" value="1"/>
</dbReference>
<dbReference type="SUPFAM" id="SSF47781">
    <property type="entry name" value="RuvA domain 2-like"/>
    <property type="match status" value="1"/>
</dbReference>
<proteinExistence type="inferred from homology"/>
<sequence length="193" mass="20547">MITSLTGTILQRRPPWLWLDVQGVGYELEMPLSGFYQMPAEGAALTVHTHLTIREDAHLLYGFMTVAERDMFRLLIRVNGIGGKVALACLSGLPAERLSQAVAEGNTAQLTAIPGIGPKTAERLVVELRDKMGGIAPGPMGRGGAGDPRQEAIAALLTLGYKPAQASQAIAGLADGLGLEDLIRQSLQNLSRH</sequence>
<feature type="chain" id="PRO_1000090274" description="Holliday junction branch migration complex subunit RuvA">
    <location>
        <begin position="1"/>
        <end position="193"/>
    </location>
</feature>
<feature type="region of interest" description="Domain I" evidence="1">
    <location>
        <begin position="1"/>
        <end position="64"/>
    </location>
</feature>
<feature type="region of interest" description="Domain II" evidence="1">
    <location>
        <begin position="65"/>
        <end position="139"/>
    </location>
</feature>
<feature type="region of interest" description="Flexible linker" evidence="1">
    <location>
        <begin position="139"/>
        <end position="143"/>
    </location>
</feature>
<feature type="region of interest" description="Domain III" evidence="1">
    <location>
        <begin position="144"/>
        <end position="193"/>
    </location>
</feature>
<comment type="function">
    <text evidence="1">The RuvA-RuvB-RuvC complex processes Holliday junction (HJ) DNA during genetic recombination and DNA repair, while the RuvA-RuvB complex plays an important role in the rescue of blocked DNA replication forks via replication fork reversal (RFR). RuvA specifically binds to HJ cruciform DNA, conferring on it an open structure. The RuvB hexamer acts as an ATP-dependent pump, pulling dsDNA into and through the RuvAB complex. HJ branch migration allows RuvC to scan DNA until it finds its consensus sequence, where it cleaves and resolves the cruciform DNA.</text>
</comment>
<comment type="subunit">
    <text evidence="1">Homotetramer. Forms an RuvA(8)-RuvB(12)-Holliday junction (HJ) complex. HJ DNA is sandwiched between 2 RuvA tetramers; dsDNA enters through RuvA and exits via RuvB. An RuvB hexamer assembles on each DNA strand where it exits the tetramer. Each RuvB hexamer is contacted by two RuvA subunits (via domain III) on 2 adjacent RuvB subunits; this complex drives branch migration. In the full resolvosome a probable DNA-RuvA(4)-RuvB(12)-RuvC(2) complex forms which resolves the HJ.</text>
</comment>
<comment type="subcellular location">
    <subcellularLocation>
        <location evidence="1">Cytoplasm</location>
    </subcellularLocation>
</comment>
<comment type="domain">
    <text evidence="1">Has three domains with a flexible linker between the domains II and III and assumes an 'L' shape. Domain III is highly mobile and contacts RuvB.</text>
</comment>
<comment type="similarity">
    <text evidence="1">Belongs to the RuvA family.</text>
</comment>
<reference key="1">
    <citation type="submission" date="2008-08" db="EMBL/GenBank/DDBJ databases">
        <title>Complete sequence of Acidithiobacillus ferrooxidans ATCC 53993.</title>
        <authorList>
            <person name="Lucas S."/>
            <person name="Copeland A."/>
            <person name="Lapidus A."/>
            <person name="Glavina del Rio T."/>
            <person name="Dalin E."/>
            <person name="Tice H."/>
            <person name="Bruce D."/>
            <person name="Goodwin L."/>
            <person name="Pitluck S."/>
            <person name="Sims D."/>
            <person name="Brettin T."/>
            <person name="Detter J.C."/>
            <person name="Han C."/>
            <person name="Kuske C.R."/>
            <person name="Larimer F."/>
            <person name="Land M."/>
            <person name="Hauser L."/>
            <person name="Kyrpides N."/>
            <person name="Lykidis A."/>
            <person name="Borole A.P."/>
        </authorList>
    </citation>
    <scope>NUCLEOTIDE SEQUENCE [LARGE SCALE GENOMIC DNA]</scope>
    <source>
        <strain>ATCC 53993 / BNL-5-31</strain>
    </source>
</reference>
<accession>B5EJL8</accession>